<protein>
    <recommendedName>
        <fullName evidence="1">Threonine--tRNA ligase</fullName>
        <ecNumber evidence="1">6.1.1.3</ecNumber>
    </recommendedName>
    <alternativeName>
        <fullName evidence="1">Threonyl-tRNA synthetase</fullName>
        <shortName evidence="1">ThrRS</shortName>
    </alternativeName>
</protein>
<dbReference type="EC" id="6.1.1.3" evidence="1"/>
<dbReference type="EMBL" id="CP001197">
    <property type="protein sequence ID" value="ACL07939.1"/>
    <property type="molecule type" value="Genomic_DNA"/>
</dbReference>
<dbReference type="SMR" id="B8DPN2"/>
<dbReference type="STRING" id="883.DvMF_0984"/>
<dbReference type="KEGG" id="dvm:DvMF_0984"/>
<dbReference type="eggNOG" id="COG0441">
    <property type="taxonomic scope" value="Bacteria"/>
</dbReference>
<dbReference type="HOGENOM" id="CLU_008554_0_1_7"/>
<dbReference type="OrthoDB" id="9802304at2"/>
<dbReference type="GO" id="GO:0005829">
    <property type="term" value="C:cytosol"/>
    <property type="evidence" value="ECO:0007669"/>
    <property type="project" value="TreeGrafter"/>
</dbReference>
<dbReference type="GO" id="GO:0005524">
    <property type="term" value="F:ATP binding"/>
    <property type="evidence" value="ECO:0007669"/>
    <property type="project" value="UniProtKB-UniRule"/>
</dbReference>
<dbReference type="GO" id="GO:0046872">
    <property type="term" value="F:metal ion binding"/>
    <property type="evidence" value="ECO:0007669"/>
    <property type="project" value="UniProtKB-KW"/>
</dbReference>
<dbReference type="GO" id="GO:0004829">
    <property type="term" value="F:threonine-tRNA ligase activity"/>
    <property type="evidence" value="ECO:0007669"/>
    <property type="project" value="UniProtKB-UniRule"/>
</dbReference>
<dbReference type="GO" id="GO:0000049">
    <property type="term" value="F:tRNA binding"/>
    <property type="evidence" value="ECO:0007669"/>
    <property type="project" value="UniProtKB-KW"/>
</dbReference>
<dbReference type="GO" id="GO:0006435">
    <property type="term" value="P:threonyl-tRNA aminoacylation"/>
    <property type="evidence" value="ECO:0007669"/>
    <property type="project" value="UniProtKB-UniRule"/>
</dbReference>
<dbReference type="CDD" id="cd00860">
    <property type="entry name" value="ThrRS_anticodon"/>
    <property type="match status" value="1"/>
</dbReference>
<dbReference type="CDD" id="cd00771">
    <property type="entry name" value="ThrRS_core"/>
    <property type="match status" value="1"/>
</dbReference>
<dbReference type="FunFam" id="3.30.54.20:FF:000002">
    <property type="entry name" value="Threonine--tRNA ligase"/>
    <property type="match status" value="1"/>
</dbReference>
<dbReference type="FunFam" id="3.30.930.10:FF:000002">
    <property type="entry name" value="Threonine--tRNA ligase"/>
    <property type="match status" value="1"/>
</dbReference>
<dbReference type="FunFam" id="3.40.50.800:FF:000001">
    <property type="entry name" value="Threonine--tRNA ligase"/>
    <property type="match status" value="1"/>
</dbReference>
<dbReference type="FunFam" id="3.30.980.10:FF:000005">
    <property type="entry name" value="Threonyl-tRNA synthetase, mitochondrial"/>
    <property type="match status" value="1"/>
</dbReference>
<dbReference type="Gene3D" id="3.30.54.20">
    <property type="match status" value="1"/>
</dbReference>
<dbReference type="Gene3D" id="3.40.50.800">
    <property type="entry name" value="Anticodon-binding domain"/>
    <property type="match status" value="1"/>
</dbReference>
<dbReference type="Gene3D" id="3.30.930.10">
    <property type="entry name" value="Bira Bifunctional Protein, Domain 2"/>
    <property type="match status" value="1"/>
</dbReference>
<dbReference type="Gene3D" id="3.30.980.10">
    <property type="entry name" value="Threonyl-trna Synthetase, Chain A, domain 2"/>
    <property type="match status" value="1"/>
</dbReference>
<dbReference type="HAMAP" id="MF_00184">
    <property type="entry name" value="Thr_tRNA_synth"/>
    <property type="match status" value="1"/>
</dbReference>
<dbReference type="InterPro" id="IPR002314">
    <property type="entry name" value="aa-tRNA-synt_IIb"/>
</dbReference>
<dbReference type="InterPro" id="IPR006195">
    <property type="entry name" value="aa-tRNA-synth_II"/>
</dbReference>
<dbReference type="InterPro" id="IPR045864">
    <property type="entry name" value="aa-tRNA-synth_II/BPL/LPL"/>
</dbReference>
<dbReference type="InterPro" id="IPR004154">
    <property type="entry name" value="Anticodon-bd"/>
</dbReference>
<dbReference type="InterPro" id="IPR036621">
    <property type="entry name" value="Anticodon-bd_dom_sf"/>
</dbReference>
<dbReference type="InterPro" id="IPR004095">
    <property type="entry name" value="TGS"/>
</dbReference>
<dbReference type="InterPro" id="IPR002320">
    <property type="entry name" value="Thr-tRNA-ligase_IIa"/>
</dbReference>
<dbReference type="InterPro" id="IPR018163">
    <property type="entry name" value="Thr/Ala-tRNA-synth_IIc_edit"/>
</dbReference>
<dbReference type="InterPro" id="IPR047246">
    <property type="entry name" value="ThrRS_anticodon"/>
</dbReference>
<dbReference type="InterPro" id="IPR033728">
    <property type="entry name" value="ThrRS_core"/>
</dbReference>
<dbReference type="InterPro" id="IPR012947">
    <property type="entry name" value="tRNA_SAD"/>
</dbReference>
<dbReference type="NCBIfam" id="TIGR00418">
    <property type="entry name" value="thrS"/>
    <property type="match status" value="1"/>
</dbReference>
<dbReference type="PANTHER" id="PTHR11451:SF44">
    <property type="entry name" value="THREONINE--TRNA LIGASE, CHLOROPLASTIC_MITOCHONDRIAL 2"/>
    <property type="match status" value="1"/>
</dbReference>
<dbReference type="PANTHER" id="PTHR11451">
    <property type="entry name" value="THREONINE-TRNA LIGASE"/>
    <property type="match status" value="1"/>
</dbReference>
<dbReference type="Pfam" id="PF03129">
    <property type="entry name" value="HGTP_anticodon"/>
    <property type="match status" value="1"/>
</dbReference>
<dbReference type="Pfam" id="PF00587">
    <property type="entry name" value="tRNA-synt_2b"/>
    <property type="match status" value="1"/>
</dbReference>
<dbReference type="Pfam" id="PF07973">
    <property type="entry name" value="tRNA_SAD"/>
    <property type="match status" value="1"/>
</dbReference>
<dbReference type="PRINTS" id="PR01047">
    <property type="entry name" value="TRNASYNTHTHR"/>
</dbReference>
<dbReference type="SMART" id="SM00863">
    <property type="entry name" value="tRNA_SAD"/>
    <property type="match status" value="1"/>
</dbReference>
<dbReference type="SUPFAM" id="SSF52954">
    <property type="entry name" value="Class II aaRS ABD-related"/>
    <property type="match status" value="1"/>
</dbReference>
<dbReference type="SUPFAM" id="SSF55681">
    <property type="entry name" value="Class II aaRS and biotin synthetases"/>
    <property type="match status" value="1"/>
</dbReference>
<dbReference type="SUPFAM" id="SSF55186">
    <property type="entry name" value="ThrRS/AlaRS common domain"/>
    <property type="match status" value="1"/>
</dbReference>
<dbReference type="PROSITE" id="PS50862">
    <property type="entry name" value="AA_TRNA_LIGASE_II"/>
    <property type="match status" value="1"/>
</dbReference>
<dbReference type="PROSITE" id="PS51880">
    <property type="entry name" value="TGS"/>
    <property type="match status" value="1"/>
</dbReference>
<feature type="chain" id="PRO_1000199542" description="Threonine--tRNA ligase">
    <location>
        <begin position="1"/>
        <end position="644"/>
    </location>
</feature>
<feature type="domain" description="TGS" evidence="2">
    <location>
        <begin position="1"/>
        <end position="61"/>
    </location>
</feature>
<feature type="region of interest" description="Catalytic" evidence="1">
    <location>
        <begin position="241"/>
        <end position="532"/>
    </location>
</feature>
<feature type="binding site" evidence="1">
    <location>
        <position position="333"/>
    </location>
    <ligand>
        <name>Zn(2+)</name>
        <dbReference type="ChEBI" id="CHEBI:29105"/>
    </ligand>
</feature>
<feature type="binding site" evidence="1">
    <location>
        <position position="384"/>
    </location>
    <ligand>
        <name>Zn(2+)</name>
        <dbReference type="ChEBI" id="CHEBI:29105"/>
    </ligand>
</feature>
<feature type="binding site" evidence="1">
    <location>
        <position position="509"/>
    </location>
    <ligand>
        <name>Zn(2+)</name>
        <dbReference type="ChEBI" id="CHEBI:29105"/>
    </ligand>
</feature>
<keyword id="KW-0030">Aminoacyl-tRNA synthetase</keyword>
<keyword id="KW-0067">ATP-binding</keyword>
<keyword id="KW-0963">Cytoplasm</keyword>
<keyword id="KW-0436">Ligase</keyword>
<keyword id="KW-0479">Metal-binding</keyword>
<keyword id="KW-0547">Nucleotide-binding</keyword>
<keyword id="KW-0648">Protein biosynthesis</keyword>
<keyword id="KW-0694">RNA-binding</keyword>
<keyword id="KW-0820">tRNA-binding</keyword>
<keyword id="KW-0862">Zinc</keyword>
<reference key="1">
    <citation type="submission" date="2008-10" db="EMBL/GenBank/DDBJ databases">
        <title>Complete sequence of Desulfovibrio vulgaris str. 'Miyazaki F'.</title>
        <authorList>
            <person name="Lucas S."/>
            <person name="Copeland A."/>
            <person name="Lapidus A."/>
            <person name="Glavina del Rio T."/>
            <person name="Dalin E."/>
            <person name="Tice H."/>
            <person name="Bruce D."/>
            <person name="Goodwin L."/>
            <person name="Pitluck S."/>
            <person name="Sims D."/>
            <person name="Brettin T."/>
            <person name="Detter J.C."/>
            <person name="Han C."/>
            <person name="Larimer F."/>
            <person name="Land M."/>
            <person name="Hauser L."/>
            <person name="Kyrpides N."/>
            <person name="Mikhailova N."/>
            <person name="Hazen T.C."/>
            <person name="Richardson P."/>
        </authorList>
    </citation>
    <scope>NUCLEOTIDE SEQUENCE [LARGE SCALE GENOMIC DNA]</scope>
    <source>
        <strain>DSM 19637 / Miyazaki F</strain>
    </source>
</reference>
<proteinExistence type="inferred from homology"/>
<sequence length="644" mass="72365">MNVTIEGQVFDVQSGVSCRDALKGALSGKKFKNVVACRCNGTPLDLTATVPADTTTIEPVFADSPEGIELIRHSAAHIMAEAVQKLFPGVKVTIGPAIDSGFYYDFDYERPFSVDDLEAIEAEMQKIVAAAHPFTRTEMTKDEAVALFEGMGEAYKVEIVRDIPADTVSVYRSGDFVDLCRGPHIPDTSFVKAFKLLSVAGAYWRGDEKNRMLSRVYGTAFADPKALKDHLHQIEEAKRRDHRKLGQQLDLFAFHEDVAPGMVYWHPKGMLLRTILEDFLRKEHLKRGYELVQGPQLLRREVWEKSGHYDNYRENMYFTVIDDNAYGVKPMNCVSHMLIYKSHLRSYRDLPRRMFELGVVHRHEKSGVLHGLLRVRQFTQDDAHILCRPDQLEAEIIGVIALVRDLMGLFGFDYRIVISTRPEKSIGSDEDWDRATNALIGAVATAGLSHTINEGDGAFYGPKIDIKVTDAIGREWQLSTIQVDFTLPDRFDLVYIGQDGERHRPVMVHRAILGSLERFIGVLTEHFAGAFPTWIVPVQARLLTVTDAQNDFAMGARDQLVAAGLRVEADTRNEKLGYKVREAQLEKIPYILVVGDKEVEAGGVNVRLRNGENLGLKTLAEVAEMIRADCQEPFKRGGMSYSFS</sequence>
<evidence type="ECO:0000255" key="1">
    <source>
        <dbReference type="HAMAP-Rule" id="MF_00184"/>
    </source>
</evidence>
<evidence type="ECO:0000255" key="2">
    <source>
        <dbReference type="PROSITE-ProRule" id="PRU01228"/>
    </source>
</evidence>
<name>SYT_NITV9</name>
<gene>
    <name evidence="1" type="primary">thrS</name>
    <name type="ordered locus">DvMF_0984</name>
</gene>
<organism>
    <name type="scientific">Nitratidesulfovibrio vulgaris (strain DSM 19637 / Miyazaki F)</name>
    <name type="common">Desulfovibrio vulgaris</name>
    <dbReference type="NCBI Taxonomy" id="883"/>
    <lineage>
        <taxon>Bacteria</taxon>
        <taxon>Pseudomonadati</taxon>
        <taxon>Thermodesulfobacteriota</taxon>
        <taxon>Desulfovibrionia</taxon>
        <taxon>Desulfovibrionales</taxon>
        <taxon>Desulfovibrionaceae</taxon>
        <taxon>Nitratidesulfovibrio</taxon>
    </lineage>
</organism>
<accession>B8DPN2</accession>
<comment type="function">
    <text evidence="1">Catalyzes the attachment of threonine to tRNA(Thr) in a two-step reaction: L-threonine is first activated by ATP to form Thr-AMP and then transferred to the acceptor end of tRNA(Thr). Also edits incorrectly charged L-seryl-tRNA(Thr).</text>
</comment>
<comment type="catalytic activity">
    <reaction evidence="1">
        <text>tRNA(Thr) + L-threonine + ATP = L-threonyl-tRNA(Thr) + AMP + diphosphate + H(+)</text>
        <dbReference type="Rhea" id="RHEA:24624"/>
        <dbReference type="Rhea" id="RHEA-COMP:9670"/>
        <dbReference type="Rhea" id="RHEA-COMP:9704"/>
        <dbReference type="ChEBI" id="CHEBI:15378"/>
        <dbReference type="ChEBI" id="CHEBI:30616"/>
        <dbReference type="ChEBI" id="CHEBI:33019"/>
        <dbReference type="ChEBI" id="CHEBI:57926"/>
        <dbReference type="ChEBI" id="CHEBI:78442"/>
        <dbReference type="ChEBI" id="CHEBI:78534"/>
        <dbReference type="ChEBI" id="CHEBI:456215"/>
        <dbReference type="EC" id="6.1.1.3"/>
    </reaction>
</comment>
<comment type="cofactor">
    <cofactor evidence="1">
        <name>Zn(2+)</name>
        <dbReference type="ChEBI" id="CHEBI:29105"/>
    </cofactor>
    <text evidence="1">Binds 1 zinc ion per subunit.</text>
</comment>
<comment type="subunit">
    <text evidence="1">Homodimer.</text>
</comment>
<comment type="subcellular location">
    <subcellularLocation>
        <location evidence="1">Cytoplasm</location>
    </subcellularLocation>
</comment>
<comment type="similarity">
    <text evidence="1">Belongs to the class-II aminoacyl-tRNA synthetase family.</text>
</comment>